<name>YNFB_ECO55</name>
<organism>
    <name type="scientific">Escherichia coli (strain 55989 / EAEC)</name>
    <dbReference type="NCBI Taxonomy" id="585055"/>
    <lineage>
        <taxon>Bacteria</taxon>
        <taxon>Pseudomonadati</taxon>
        <taxon>Pseudomonadota</taxon>
        <taxon>Gammaproteobacteria</taxon>
        <taxon>Enterobacterales</taxon>
        <taxon>Enterobacteriaceae</taxon>
        <taxon>Escherichia</taxon>
    </lineage>
</organism>
<protein>
    <recommendedName>
        <fullName evidence="1">UPF0482 protein YnfB</fullName>
    </recommendedName>
</protein>
<feature type="signal peptide" evidence="1">
    <location>
        <begin position="1"/>
        <end position="28"/>
    </location>
</feature>
<feature type="chain" id="PRO_1000185650" description="UPF0482 protein YnfB">
    <location>
        <begin position="29"/>
        <end position="113"/>
    </location>
</feature>
<proteinExistence type="inferred from homology"/>
<evidence type="ECO:0000255" key="1">
    <source>
        <dbReference type="HAMAP-Rule" id="MF_01581"/>
    </source>
</evidence>
<comment type="similarity">
    <text evidence="1">Belongs to the UPF0482 family.</text>
</comment>
<dbReference type="EMBL" id="CU928145">
    <property type="protein sequence ID" value="CAU97602.1"/>
    <property type="molecule type" value="Genomic_DNA"/>
</dbReference>
<dbReference type="RefSeq" id="WP_000705197.1">
    <property type="nucleotide sequence ID" value="NC_011748.1"/>
</dbReference>
<dbReference type="KEGG" id="eck:EC55989_1748"/>
<dbReference type="HOGENOM" id="CLU_167574_0_0_6"/>
<dbReference type="Proteomes" id="UP000000746">
    <property type="component" value="Chromosome"/>
</dbReference>
<dbReference type="HAMAP" id="MF_01581">
    <property type="entry name" value="UPF0482"/>
    <property type="match status" value="1"/>
</dbReference>
<dbReference type="InterPro" id="IPR009700">
    <property type="entry name" value="DUF1283"/>
</dbReference>
<dbReference type="NCBIfam" id="NF010180">
    <property type="entry name" value="PRK13659.1"/>
    <property type="match status" value="1"/>
</dbReference>
<dbReference type="Pfam" id="PF06932">
    <property type="entry name" value="DUF1283"/>
    <property type="match status" value="1"/>
</dbReference>
<keyword id="KW-1185">Reference proteome</keyword>
<keyword id="KW-0732">Signal</keyword>
<reference key="1">
    <citation type="journal article" date="2009" name="PLoS Genet.">
        <title>Organised genome dynamics in the Escherichia coli species results in highly diverse adaptive paths.</title>
        <authorList>
            <person name="Touchon M."/>
            <person name="Hoede C."/>
            <person name="Tenaillon O."/>
            <person name="Barbe V."/>
            <person name="Baeriswyl S."/>
            <person name="Bidet P."/>
            <person name="Bingen E."/>
            <person name="Bonacorsi S."/>
            <person name="Bouchier C."/>
            <person name="Bouvet O."/>
            <person name="Calteau A."/>
            <person name="Chiapello H."/>
            <person name="Clermont O."/>
            <person name="Cruveiller S."/>
            <person name="Danchin A."/>
            <person name="Diard M."/>
            <person name="Dossat C."/>
            <person name="Karoui M.E."/>
            <person name="Frapy E."/>
            <person name="Garry L."/>
            <person name="Ghigo J.M."/>
            <person name="Gilles A.M."/>
            <person name="Johnson J."/>
            <person name="Le Bouguenec C."/>
            <person name="Lescat M."/>
            <person name="Mangenot S."/>
            <person name="Martinez-Jehanne V."/>
            <person name="Matic I."/>
            <person name="Nassif X."/>
            <person name="Oztas S."/>
            <person name="Petit M.A."/>
            <person name="Pichon C."/>
            <person name="Rouy Z."/>
            <person name="Ruf C.S."/>
            <person name="Schneider D."/>
            <person name="Tourret J."/>
            <person name="Vacherie B."/>
            <person name="Vallenet D."/>
            <person name="Medigue C."/>
            <person name="Rocha E.P.C."/>
            <person name="Denamur E."/>
        </authorList>
    </citation>
    <scope>NUCLEOTIDE SEQUENCE [LARGE SCALE GENOMIC DNA]</scope>
    <source>
        <strain>55989 / EAEC</strain>
    </source>
</reference>
<accession>B7L5D5</accession>
<gene>
    <name evidence="1" type="primary">ynfB</name>
    <name type="ordered locus">EC55989_1748</name>
</gene>
<sequence length="113" mass="12943">MKITLSKRIGLLAFLLPCALALSTTVHAETNKLVIESGDSAQSRQHAAMEKEQWNDTRNLRQKVNKRTEKEWDKADAAFDNRDKCEQSANINAYWEPNTLRCLDRRTGRVITP</sequence>